<gene>
    <name evidence="1" type="primary">rpl44e</name>
    <name type="ordered locus">VNG_0551G</name>
</gene>
<dbReference type="EMBL" id="AE004437">
    <property type="protein sequence ID" value="AAG19072.1"/>
    <property type="status" value="ALT_INIT"/>
    <property type="molecule type" value="Genomic_DNA"/>
</dbReference>
<dbReference type="PIR" id="D84213">
    <property type="entry name" value="D84213"/>
</dbReference>
<dbReference type="RefSeq" id="WP_012289179.1">
    <property type="nucleotide sequence ID" value="NC_002607.1"/>
</dbReference>
<dbReference type="SMR" id="Q9HRT6"/>
<dbReference type="FunCoup" id="Q9HRT6">
    <property type="interactions" value="126"/>
</dbReference>
<dbReference type="STRING" id="64091.VNG_0551G"/>
<dbReference type="PaxDb" id="64091-VNG_0551G"/>
<dbReference type="KEGG" id="hal:VNG_0551G"/>
<dbReference type="PATRIC" id="fig|64091.14.peg.420"/>
<dbReference type="HOGENOM" id="CLU_2911433_0_0_2"/>
<dbReference type="InParanoid" id="Q9HRT6"/>
<dbReference type="OrthoDB" id="52456at2157"/>
<dbReference type="PhylomeDB" id="Q9HRT6"/>
<dbReference type="Proteomes" id="UP000000554">
    <property type="component" value="Chromosome"/>
</dbReference>
<dbReference type="GO" id="GO:1990904">
    <property type="term" value="C:ribonucleoprotein complex"/>
    <property type="evidence" value="ECO:0007669"/>
    <property type="project" value="UniProtKB-KW"/>
</dbReference>
<dbReference type="GO" id="GO:0005840">
    <property type="term" value="C:ribosome"/>
    <property type="evidence" value="ECO:0007669"/>
    <property type="project" value="UniProtKB-KW"/>
</dbReference>
<dbReference type="GO" id="GO:0070180">
    <property type="term" value="F:large ribosomal subunit rRNA binding"/>
    <property type="evidence" value="ECO:0007669"/>
    <property type="project" value="UniProtKB-UniRule"/>
</dbReference>
<dbReference type="GO" id="GO:0003735">
    <property type="term" value="F:structural constituent of ribosome"/>
    <property type="evidence" value="ECO:0007669"/>
    <property type="project" value="InterPro"/>
</dbReference>
<dbReference type="GO" id="GO:0008270">
    <property type="term" value="F:zinc ion binding"/>
    <property type="evidence" value="ECO:0007669"/>
    <property type="project" value="UniProtKB-UniRule"/>
</dbReference>
<dbReference type="GO" id="GO:0006412">
    <property type="term" value="P:translation"/>
    <property type="evidence" value="ECO:0007669"/>
    <property type="project" value="UniProtKB-UniRule"/>
</dbReference>
<dbReference type="Gene3D" id="3.10.450.80">
    <property type="match status" value="1"/>
</dbReference>
<dbReference type="HAMAP" id="MF_01476">
    <property type="entry name" value="Ribosomal_L44e"/>
    <property type="match status" value="1"/>
</dbReference>
<dbReference type="InterPro" id="IPR000552">
    <property type="entry name" value="Ribosomal_eL44"/>
</dbReference>
<dbReference type="InterPro" id="IPR053708">
    <property type="entry name" value="Ribosomal_LSU_eL42"/>
</dbReference>
<dbReference type="InterPro" id="IPR011332">
    <property type="entry name" value="Ribosomal_zn-bd"/>
</dbReference>
<dbReference type="NCBIfam" id="NF004425">
    <property type="entry name" value="PRK05767.1"/>
    <property type="match status" value="1"/>
</dbReference>
<dbReference type="Pfam" id="PF00935">
    <property type="entry name" value="Ribosomal_L44"/>
    <property type="match status" value="1"/>
</dbReference>
<dbReference type="SUPFAM" id="SSF57829">
    <property type="entry name" value="Zn-binding ribosomal proteins"/>
    <property type="match status" value="1"/>
</dbReference>
<proteinExistence type="inferred from homology"/>
<reference key="1">
    <citation type="journal article" date="2000" name="Proc. Natl. Acad. Sci. U.S.A.">
        <title>Genome sequence of Halobacterium species NRC-1.</title>
        <authorList>
            <person name="Ng W.V."/>
            <person name="Kennedy S.P."/>
            <person name="Mahairas G.G."/>
            <person name="Berquist B."/>
            <person name="Pan M."/>
            <person name="Shukla H.D."/>
            <person name="Lasky S.R."/>
            <person name="Baliga N.S."/>
            <person name="Thorsson V."/>
            <person name="Sbrogna J."/>
            <person name="Swartzell S."/>
            <person name="Weir D."/>
            <person name="Hall J."/>
            <person name="Dahl T.A."/>
            <person name="Welti R."/>
            <person name="Goo Y.A."/>
            <person name="Leithauser B."/>
            <person name="Keller K."/>
            <person name="Cruz R."/>
            <person name="Danson M.J."/>
            <person name="Hough D.W."/>
            <person name="Maddocks D.G."/>
            <person name="Jablonski P.E."/>
            <person name="Krebs M.P."/>
            <person name="Angevine C.M."/>
            <person name="Dale H."/>
            <person name="Isenbarger T.A."/>
            <person name="Peck R.F."/>
            <person name="Pohlschroder M."/>
            <person name="Spudich J.L."/>
            <person name="Jung K.-H."/>
            <person name="Alam M."/>
            <person name="Freitas T."/>
            <person name="Hou S."/>
            <person name="Daniels C.J."/>
            <person name="Dennis P.P."/>
            <person name="Omer A.D."/>
            <person name="Ebhardt H."/>
            <person name="Lowe T.M."/>
            <person name="Liang P."/>
            <person name="Riley M."/>
            <person name="Hood L."/>
            <person name="DasSarma S."/>
        </authorList>
    </citation>
    <scope>NUCLEOTIDE SEQUENCE [LARGE SCALE GENOMIC DNA]</scope>
    <source>
        <strain>ATCC 700922 / JCM 11081 / NRC-1</strain>
    </source>
</reference>
<keyword id="KW-0479">Metal-binding</keyword>
<keyword id="KW-1185">Reference proteome</keyword>
<keyword id="KW-0687">Ribonucleoprotein</keyword>
<keyword id="KW-0689">Ribosomal protein</keyword>
<keyword id="KW-0694">RNA-binding</keyword>
<keyword id="KW-0699">rRNA-binding</keyword>
<keyword id="KW-0862">Zinc</keyword>
<keyword id="KW-0863">Zinc-finger</keyword>
<evidence type="ECO:0000255" key="1">
    <source>
        <dbReference type="HAMAP-Rule" id="MF_01476"/>
    </source>
</evidence>
<evidence type="ECO:0000256" key="2">
    <source>
        <dbReference type="SAM" id="MobiDB-lite"/>
    </source>
</evidence>
<evidence type="ECO:0000305" key="3"/>
<protein>
    <recommendedName>
        <fullName evidence="1">Large ribosomal subunit protein eL42</fullName>
    </recommendedName>
    <alternativeName>
        <fullName evidence="3">50S ribosomal protein L44e</fullName>
    </alternativeName>
</protein>
<comment type="function">
    <text evidence="1">Binds to the 23S rRNA.</text>
</comment>
<comment type="cofactor">
    <cofactor evidence="1">
        <name>Zn(2+)</name>
        <dbReference type="ChEBI" id="CHEBI:29105"/>
    </cofactor>
    <text evidence="1">Binds 1 zinc ion per subunit.</text>
</comment>
<comment type="subunit">
    <text evidence="1">Part of the 50S ribosomal subunit.</text>
</comment>
<comment type="similarity">
    <text evidence="1">Belongs to the eukaryotic ribosomal protein eL42 family.</text>
</comment>
<comment type="sequence caution" evidence="3">
    <conflict type="erroneous initiation">
        <sequence resource="EMBL-CDS" id="AAG19072"/>
    </conflict>
    <text>Truncated N-terminus.</text>
</comment>
<sequence>MEMPRRFNSYCPNCDEHHQLEAEKVRSGRSSGMKWDARRTKRANASIGNHGRFSKVPVGNKPTNRTDLKYRCSECGNAHLREGWRAGRLVLQE</sequence>
<name>RL44E_HALSA</name>
<organism>
    <name type="scientific">Halobacterium salinarum (strain ATCC 700922 / JCM 11081 / NRC-1)</name>
    <name type="common">Halobacterium halobium</name>
    <dbReference type="NCBI Taxonomy" id="64091"/>
    <lineage>
        <taxon>Archaea</taxon>
        <taxon>Methanobacteriati</taxon>
        <taxon>Methanobacteriota</taxon>
        <taxon>Stenosarchaea group</taxon>
        <taxon>Halobacteria</taxon>
        <taxon>Halobacteriales</taxon>
        <taxon>Halobacteriaceae</taxon>
        <taxon>Halobacterium</taxon>
        <taxon>Halobacterium salinarum NRC-34001</taxon>
    </lineage>
</organism>
<feature type="chain" id="PRO_0000419126" description="Large ribosomal subunit protein eL42">
    <location>
        <begin position="1"/>
        <end position="93"/>
    </location>
</feature>
<feature type="zinc finger region" description="C4-type" evidence="1">
    <location>
        <begin position="11"/>
        <end position="75"/>
    </location>
</feature>
<feature type="region of interest" description="Disordered" evidence="2">
    <location>
        <begin position="24"/>
        <end position="62"/>
    </location>
</feature>
<feature type="binding site" evidence="1">
    <location>
        <position position="11"/>
    </location>
    <ligand>
        <name>Zn(2+)</name>
        <dbReference type="ChEBI" id="CHEBI:29105"/>
    </ligand>
</feature>
<feature type="binding site" evidence="1">
    <location>
        <position position="14"/>
    </location>
    <ligand>
        <name>Zn(2+)</name>
        <dbReference type="ChEBI" id="CHEBI:29105"/>
    </ligand>
</feature>
<feature type="binding site" evidence="1">
    <location>
        <position position="72"/>
    </location>
    <ligand>
        <name>Zn(2+)</name>
        <dbReference type="ChEBI" id="CHEBI:29105"/>
    </ligand>
</feature>
<feature type="binding site" evidence="1">
    <location>
        <position position="75"/>
    </location>
    <ligand>
        <name>Zn(2+)</name>
        <dbReference type="ChEBI" id="CHEBI:29105"/>
    </ligand>
</feature>
<accession>Q9HRT6</accession>